<organism evidence="7">
    <name type="scientific">Amolops mantzorum</name>
    <name type="common">Sichuan torrent frog</name>
    <dbReference type="NCBI Taxonomy" id="167930"/>
    <lineage>
        <taxon>Eukaryota</taxon>
        <taxon>Metazoa</taxon>
        <taxon>Chordata</taxon>
        <taxon>Craniata</taxon>
        <taxon>Vertebrata</taxon>
        <taxon>Euteleostomi</taxon>
        <taxon>Amphibia</taxon>
        <taxon>Batrachia</taxon>
        <taxon>Anura</taxon>
        <taxon>Neobatrachia</taxon>
        <taxon>Ranoidea</taxon>
        <taxon>Ranidae</taxon>
        <taxon>Amolops</taxon>
    </lineage>
</organism>
<accession>E1B243</accession>
<keyword id="KW-0878">Amphibian defense peptide</keyword>
<keyword id="KW-0929">Antimicrobial</keyword>
<keyword id="KW-0165">Cleavage on pair of basic residues</keyword>
<keyword id="KW-0903">Direct protein sequencing</keyword>
<keyword id="KW-1015">Disulfide bond</keyword>
<keyword id="KW-0964">Secreted</keyword>
<keyword id="KW-0732">Signal</keyword>
<sequence>MFTLKKSMLLLFFLGTISLSLCEEERNADEDDGEKEVKRGIFALIKTAAKFVGKNLLRQAGKAGLEHLACKANNQC</sequence>
<name>E2MT3_AMOMA</name>
<protein>
    <recommendedName>
        <fullName evidence="7">Esculentin-2MT3</fullName>
    </recommendedName>
</protein>
<reference evidence="7" key="1">
    <citation type="journal article" date="2014" name="Zool. Sci.">
        <title>Peptidomic analysis of antimicrobial peptides in skin secretions of Amolops mantzorum.</title>
        <authorList>
            <person name="Hu Y."/>
            <person name="Yu Z."/>
            <person name="Xu S."/>
            <person name="Hu Y."/>
            <person name="Guo C."/>
            <person name="Li F."/>
            <person name="Li J."/>
            <person name="Liu J."/>
            <person name="Wang H."/>
        </authorList>
    </citation>
    <scope>NUCLEOTIDE SEQUENCE [MRNA]</scope>
    <scope>PROTEIN SEQUENCE OF 40-76</scope>
    <scope>SUBCELLULAR LOCATION</scope>
    <scope>DISULFIDE BOND</scope>
    <scope>IDENTIFICATION BY MASS SPECTROMETRY</scope>
    <source>
        <tissue evidence="4">Skin</tissue>
        <tissue evidence="4">Skin secretion</tissue>
    </source>
</reference>
<feature type="signal peptide" evidence="2">
    <location>
        <begin position="1"/>
        <end position="22"/>
    </location>
</feature>
<feature type="propeptide" id="PRO_0000440084" description="Removed in mature form" evidence="6">
    <location>
        <begin position="23"/>
        <end position="37"/>
    </location>
</feature>
<feature type="peptide" id="PRO_0000440085" description="Esculentin-2MT3" evidence="3">
    <location>
        <begin position="40"/>
        <end position="76"/>
    </location>
</feature>
<feature type="disulfide bond" evidence="3">
    <location>
        <begin position="70"/>
        <end position="76"/>
    </location>
</feature>
<comment type="function">
    <text evidence="1">Antimicrobial peptide.</text>
</comment>
<comment type="subcellular location">
    <subcellularLocation>
        <location evidence="2 3">Secreted</location>
    </subcellularLocation>
</comment>
<comment type="tissue specificity">
    <text evidence="6">Expressed by the skin glands.</text>
</comment>
<comment type="similarity">
    <text evidence="5">Belongs to the frog skin active peptide (FSAP) family. Esculentin subfamily.</text>
</comment>
<dbReference type="EMBL" id="HQ128618">
    <property type="protein sequence ID" value="ADM34276.1"/>
    <property type="molecule type" value="mRNA"/>
</dbReference>
<dbReference type="SMR" id="E1B243"/>
<dbReference type="GO" id="GO:0005576">
    <property type="term" value="C:extracellular region"/>
    <property type="evidence" value="ECO:0007669"/>
    <property type="project" value="UniProtKB-SubCell"/>
</dbReference>
<dbReference type="GO" id="GO:0006952">
    <property type="term" value="P:defense response"/>
    <property type="evidence" value="ECO:0007669"/>
    <property type="project" value="UniProtKB-KW"/>
</dbReference>
<dbReference type="InterPro" id="IPR004275">
    <property type="entry name" value="Frog_antimicrobial_propeptide"/>
</dbReference>
<dbReference type="Pfam" id="PF03032">
    <property type="entry name" value="FSAP_sig_propep"/>
    <property type="match status" value="1"/>
</dbReference>
<proteinExistence type="evidence at protein level"/>
<evidence type="ECO:0000250" key="1">
    <source>
        <dbReference type="UniProtKB" id="E1B242"/>
    </source>
</evidence>
<evidence type="ECO:0000255" key="2"/>
<evidence type="ECO:0000269" key="3">
    <source>
    </source>
</evidence>
<evidence type="ECO:0000303" key="4">
    <source>
    </source>
</evidence>
<evidence type="ECO:0000305" key="5"/>
<evidence type="ECO:0000305" key="6">
    <source>
    </source>
</evidence>
<evidence type="ECO:0000312" key="7">
    <source>
        <dbReference type="EMBL" id="ADM34276.1"/>
    </source>
</evidence>